<name>PLTE_PSEF5</name>
<evidence type="ECO:0000250" key="1">
    <source>
        <dbReference type="UniProtKB" id="P26440"/>
    </source>
</evidence>
<evidence type="ECO:0000269" key="2">
    <source>
    </source>
</evidence>
<evidence type="ECO:0000305" key="3"/>
<evidence type="ECO:0000305" key="4">
    <source>
    </source>
</evidence>
<evidence type="ECO:0000312" key="5">
    <source>
        <dbReference type="EMBL" id="AAY92063.1"/>
    </source>
</evidence>
<organism>
    <name type="scientific">Pseudomonas fluorescens (strain ATCC BAA-477 / NRRL B-23932 / Pf-5)</name>
    <dbReference type="NCBI Taxonomy" id="220664"/>
    <lineage>
        <taxon>Bacteria</taxon>
        <taxon>Pseudomonadati</taxon>
        <taxon>Pseudomonadota</taxon>
        <taxon>Gammaproteobacteria</taxon>
        <taxon>Pseudomonadales</taxon>
        <taxon>Pseudomonadaceae</taxon>
        <taxon>Pseudomonas</taxon>
    </lineage>
</organism>
<accession>Q4KCY6</accession>
<feature type="chain" id="PRO_0000444033" description="L-prolyl-[peptidyl-carrier protein] dehydrogenase">
    <location>
        <begin position="1"/>
        <end position="380"/>
    </location>
</feature>
<feature type="active site" description="Proton acceptor" evidence="1">
    <location>
        <position position="243"/>
    </location>
</feature>
<feature type="binding site" evidence="1">
    <location>
        <position position="269"/>
    </location>
    <ligand>
        <name>FAD</name>
        <dbReference type="ChEBI" id="CHEBI:57692"/>
    </ligand>
</feature>
<feature type="binding site" evidence="1">
    <location>
        <position position="280"/>
    </location>
    <ligand>
        <name>FAD</name>
        <dbReference type="ChEBI" id="CHEBI:57692"/>
    </ligand>
</feature>
<keyword id="KW-0274">FAD</keyword>
<keyword id="KW-0285">Flavoprotein</keyword>
<keyword id="KW-0560">Oxidoreductase</keyword>
<reference key="1">
    <citation type="journal article" date="2005" name="Nat. Biotechnol.">
        <title>Complete genome sequence of the plant commensal Pseudomonas fluorescens Pf-5.</title>
        <authorList>
            <person name="Paulsen I.T."/>
            <person name="Press C.M."/>
            <person name="Ravel J."/>
            <person name="Kobayashi D.Y."/>
            <person name="Myers G.S.A."/>
            <person name="Mavrodi D.V."/>
            <person name="DeBoy R.T."/>
            <person name="Seshadri R."/>
            <person name="Ren Q."/>
            <person name="Madupu R."/>
            <person name="Dodson R.J."/>
            <person name="Durkin A.S."/>
            <person name="Brinkac L.M."/>
            <person name="Daugherty S.C."/>
            <person name="Sullivan S.A."/>
            <person name="Rosovitz M.J."/>
            <person name="Gwinn M.L."/>
            <person name="Zhou L."/>
            <person name="Schneider D.J."/>
            <person name="Cartinhour S.W."/>
            <person name="Nelson W.C."/>
            <person name="Weidman J."/>
            <person name="Watkins K."/>
            <person name="Tran K."/>
            <person name="Khouri H."/>
            <person name="Pierson E.A."/>
            <person name="Pierson L.S. III"/>
            <person name="Thomashow L.S."/>
            <person name="Loper J.E."/>
        </authorList>
    </citation>
    <scope>NUCLEOTIDE SEQUENCE [LARGE SCALE GENOMIC DNA]</scope>
    <source>
        <strain>ATCC BAA-477 / NRRL B-23932 / Pf-5</strain>
    </source>
</reference>
<reference key="2">
    <citation type="journal article" date="2002" name="Chem. Biol.">
        <title>Conversion of L-proline to pyrrolyl-2-carboxyl-S-PCP during undecylprodigiosin and pyoluteorin biosynthesis.</title>
        <authorList>
            <person name="Thomas M.G."/>
            <person name="Burkart M.D."/>
            <person name="Walsh C.T."/>
        </authorList>
    </citation>
    <scope>FUNCTION</scope>
    <scope>CATALYTIC ACTIVITY</scope>
    <source>
        <strain>ATCC BAA-477 / NRRL B-23932 / Pf-5</strain>
    </source>
</reference>
<comment type="function">
    <text evidence="2">Involved in the biosynthesis of pyoluteorin. Catalyzes the desaturation of the L-prolyl-[PltL] to yield 1H-pyrrole-2-carbonyl-[PltL].</text>
</comment>
<comment type="catalytic activity">
    <reaction evidence="2">
        <text>L-prolyl-[peptidyl-carrier protein] + 2 oxidized [electron-transfer flavoprotein] + H(+) = (1H-pyrrole-2-carbonyl)-[peptidyl-carrier protein] + 2 reduced [electron-transfer flavoprotein]</text>
        <dbReference type="Rhea" id="RHEA:55152"/>
        <dbReference type="Rhea" id="RHEA-COMP:10685"/>
        <dbReference type="Rhea" id="RHEA-COMP:10686"/>
        <dbReference type="Rhea" id="RHEA-COMP:14109"/>
        <dbReference type="Rhea" id="RHEA-COMP:14110"/>
        <dbReference type="ChEBI" id="CHEBI:15378"/>
        <dbReference type="ChEBI" id="CHEBI:57692"/>
        <dbReference type="ChEBI" id="CHEBI:58307"/>
        <dbReference type="ChEBI" id="CHEBI:138622"/>
        <dbReference type="ChEBI" id="CHEBI:138623"/>
        <dbReference type="EC" id="1.3.8.14"/>
    </reaction>
</comment>
<comment type="cofactor">
    <cofactor evidence="4">
        <name>FAD</name>
        <dbReference type="ChEBI" id="CHEBI:57692"/>
    </cofactor>
</comment>
<comment type="similarity">
    <text evidence="3">Belongs to the acyl-CoA dehydrogenase family.</text>
</comment>
<dbReference type="EC" id="1.3.8.14" evidence="2"/>
<dbReference type="EMBL" id="CP000076">
    <property type="protein sequence ID" value="AAY92063.1"/>
    <property type="molecule type" value="Genomic_DNA"/>
</dbReference>
<dbReference type="RefSeq" id="WP_011061083.1">
    <property type="nucleotide sequence ID" value="NC_004129.6"/>
</dbReference>
<dbReference type="SMR" id="Q4KCY6"/>
<dbReference type="STRING" id="220664.PFL_2791"/>
<dbReference type="GeneID" id="57475842"/>
<dbReference type="KEGG" id="pfl:PFL_2791"/>
<dbReference type="PATRIC" id="fig|220664.5.peg.2847"/>
<dbReference type="eggNOG" id="COG1960">
    <property type="taxonomic scope" value="Bacteria"/>
</dbReference>
<dbReference type="HOGENOM" id="CLU_018204_0_2_6"/>
<dbReference type="BioCyc" id="MetaCyc:MONOMER-20314"/>
<dbReference type="Proteomes" id="UP000008540">
    <property type="component" value="Chromosome"/>
</dbReference>
<dbReference type="GO" id="GO:0003995">
    <property type="term" value="F:acyl-CoA dehydrogenase activity"/>
    <property type="evidence" value="ECO:0000314"/>
    <property type="project" value="JCVI"/>
</dbReference>
<dbReference type="GO" id="GO:0050660">
    <property type="term" value="F:flavin adenine dinucleotide binding"/>
    <property type="evidence" value="ECO:0007669"/>
    <property type="project" value="InterPro"/>
</dbReference>
<dbReference type="FunFam" id="1.20.140.10:FF:000001">
    <property type="entry name" value="Acyl-CoA dehydrogenase"/>
    <property type="match status" value="1"/>
</dbReference>
<dbReference type="FunFam" id="2.40.110.10:FF:000002">
    <property type="entry name" value="Acyl-CoA dehydrogenase fadE12"/>
    <property type="match status" value="1"/>
</dbReference>
<dbReference type="Gene3D" id="1.10.540.10">
    <property type="entry name" value="Acyl-CoA dehydrogenase/oxidase, N-terminal domain"/>
    <property type="match status" value="1"/>
</dbReference>
<dbReference type="Gene3D" id="2.40.110.10">
    <property type="entry name" value="Butyryl-CoA Dehydrogenase, subunit A, domain 2"/>
    <property type="match status" value="1"/>
</dbReference>
<dbReference type="Gene3D" id="1.20.140.10">
    <property type="entry name" value="Butyryl-CoA Dehydrogenase, subunit A, domain 3"/>
    <property type="match status" value="1"/>
</dbReference>
<dbReference type="InterPro" id="IPR006091">
    <property type="entry name" value="Acyl-CoA_Oxase/DH_mid-dom"/>
</dbReference>
<dbReference type="InterPro" id="IPR046373">
    <property type="entry name" value="Acyl-CoA_Oxase/DH_mid-dom_sf"/>
</dbReference>
<dbReference type="InterPro" id="IPR036250">
    <property type="entry name" value="AcylCo_DH-like_C"/>
</dbReference>
<dbReference type="InterPro" id="IPR009075">
    <property type="entry name" value="AcylCo_DH/oxidase_C"/>
</dbReference>
<dbReference type="InterPro" id="IPR013786">
    <property type="entry name" value="AcylCoA_DH/ox_N"/>
</dbReference>
<dbReference type="InterPro" id="IPR037069">
    <property type="entry name" value="AcylCoA_DH/ox_N_sf"/>
</dbReference>
<dbReference type="InterPro" id="IPR009100">
    <property type="entry name" value="AcylCoA_DH/oxidase_NM_dom_sf"/>
</dbReference>
<dbReference type="PANTHER" id="PTHR43884">
    <property type="entry name" value="ACYL-COA DEHYDROGENASE"/>
    <property type="match status" value="1"/>
</dbReference>
<dbReference type="PANTHER" id="PTHR43884:SF12">
    <property type="entry name" value="ISOVALERYL-COA DEHYDROGENASE, MITOCHONDRIAL-RELATED"/>
    <property type="match status" value="1"/>
</dbReference>
<dbReference type="Pfam" id="PF00441">
    <property type="entry name" value="Acyl-CoA_dh_1"/>
    <property type="match status" value="1"/>
</dbReference>
<dbReference type="Pfam" id="PF02770">
    <property type="entry name" value="Acyl-CoA_dh_M"/>
    <property type="match status" value="1"/>
</dbReference>
<dbReference type="Pfam" id="PF02771">
    <property type="entry name" value="Acyl-CoA_dh_N"/>
    <property type="match status" value="1"/>
</dbReference>
<dbReference type="SUPFAM" id="SSF47203">
    <property type="entry name" value="Acyl-CoA dehydrogenase C-terminal domain-like"/>
    <property type="match status" value="1"/>
</dbReference>
<dbReference type="SUPFAM" id="SSF56645">
    <property type="entry name" value="Acyl-CoA dehydrogenase NM domain-like"/>
    <property type="match status" value="1"/>
</dbReference>
<sequence length="380" mass="41058">MDFNYDDTQKKHAAMIAQVCAEQLAACGNEHSRYFTARQWAICGEAGLLGLSIPREYGGQGLGALSTAIAMHAFGLGCTDMGLVFAAAAHQFACAMPIVEFATAETKRDVLPKLASGEFIGSNAITEPEAGSDSSNLKSRAWPQADGSYRLDGHKSFAGNAPIADIFVTYATTQPEYGALGVSGFIVHRSSAGLRVSEPLDKVCLRSCPAGEVFFDDCRVPEVNRLGEEGQGRQVFQSSMGWERACLFAAFLGMMERQLEQTIEHARTRRQFGKPIGDNQAVSHRIAQMKLRLESARLLLFRACWGMDQGDPGQLNIALSKLAISEGALASSIDAVRIFGGRGCLESFGIEAMLRDSIGTTIFSGTSDMQHEIIARELKL</sequence>
<proteinExistence type="evidence at protein level"/>
<protein>
    <recommendedName>
        <fullName evidence="3">L-prolyl-[peptidyl-carrier protein] dehydrogenase</fullName>
        <ecNumber evidence="2">1.3.8.14</ecNumber>
    </recommendedName>
</protein>
<gene>
    <name evidence="5" type="primary">pltE</name>
    <name evidence="5" type="ordered locus">PFL_2791</name>
</gene>